<comment type="function">
    <text evidence="1">Peptide chain release factor 2 directs the termination of translation in response to the peptide chain termination codons UGA and UAA.</text>
</comment>
<comment type="subcellular location">
    <subcellularLocation>
        <location evidence="1">Cytoplasm</location>
    </subcellularLocation>
</comment>
<comment type="PTM">
    <text evidence="1">Methylated by PrmC. Methylation increases the termination efficiency of RF2.</text>
</comment>
<comment type="similarity">
    <text evidence="1">Belongs to the prokaryotic/mitochondrial release factor family.</text>
</comment>
<organism>
    <name type="scientific">Corynebacterium diphtheriae (strain ATCC 700971 / NCTC 13129 / Biotype gravis)</name>
    <dbReference type="NCBI Taxonomy" id="257309"/>
    <lineage>
        <taxon>Bacteria</taxon>
        <taxon>Bacillati</taxon>
        <taxon>Actinomycetota</taxon>
        <taxon>Actinomycetes</taxon>
        <taxon>Mycobacteriales</taxon>
        <taxon>Corynebacteriaceae</taxon>
        <taxon>Corynebacterium</taxon>
    </lineage>
</organism>
<dbReference type="EMBL" id="BX248356">
    <property type="protein sequence ID" value="CAE49268.1"/>
    <property type="molecule type" value="Genomic_DNA"/>
</dbReference>
<dbReference type="RefSeq" id="WP_010934526.1">
    <property type="nucleotide sequence ID" value="NC_002935.2"/>
</dbReference>
<dbReference type="SMR" id="Q6NIM2"/>
<dbReference type="STRING" id="257309.DIP0746"/>
<dbReference type="GeneID" id="29422103"/>
<dbReference type="KEGG" id="cdi:DIP0746"/>
<dbReference type="HOGENOM" id="CLU_036856_6_0_11"/>
<dbReference type="Proteomes" id="UP000002198">
    <property type="component" value="Chromosome"/>
</dbReference>
<dbReference type="GO" id="GO:0005737">
    <property type="term" value="C:cytoplasm"/>
    <property type="evidence" value="ECO:0007669"/>
    <property type="project" value="UniProtKB-SubCell"/>
</dbReference>
<dbReference type="GO" id="GO:0016149">
    <property type="term" value="F:translation release factor activity, codon specific"/>
    <property type="evidence" value="ECO:0007669"/>
    <property type="project" value="UniProtKB-UniRule"/>
</dbReference>
<dbReference type="FunFam" id="3.30.160.20:FF:000010">
    <property type="entry name" value="Peptide chain release factor 2"/>
    <property type="match status" value="1"/>
</dbReference>
<dbReference type="Gene3D" id="3.30.160.20">
    <property type="match status" value="1"/>
</dbReference>
<dbReference type="Gene3D" id="3.30.70.1660">
    <property type="match status" value="1"/>
</dbReference>
<dbReference type="Gene3D" id="1.20.58.410">
    <property type="entry name" value="Release factor"/>
    <property type="match status" value="1"/>
</dbReference>
<dbReference type="HAMAP" id="MF_00094">
    <property type="entry name" value="Rel_fac_2"/>
    <property type="match status" value="1"/>
</dbReference>
<dbReference type="InterPro" id="IPR005139">
    <property type="entry name" value="PCRF"/>
</dbReference>
<dbReference type="InterPro" id="IPR000352">
    <property type="entry name" value="Pep_chain_release_fac_I"/>
</dbReference>
<dbReference type="InterPro" id="IPR045853">
    <property type="entry name" value="Pep_chain_release_fac_I_sf"/>
</dbReference>
<dbReference type="InterPro" id="IPR004374">
    <property type="entry name" value="PrfB"/>
</dbReference>
<dbReference type="NCBIfam" id="TIGR00020">
    <property type="entry name" value="prfB"/>
    <property type="match status" value="1"/>
</dbReference>
<dbReference type="PANTHER" id="PTHR43116:SF3">
    <property type="entry name" value="CLASS I PEPTIDE CHAIN RELEASE FACTOR"/>
    <property type="match status" value="1"/>
</dbReference>
<dbReference type="PANTHER" id="PTHR43116">
    <property type="entry name" value="PEPTIDE CHAIN RELEASE FACTOR 2"/>
    <property type="match status" value="1"/>
</dbReference>
<dbReference type="Pfam" id="PF03462">
    <property type="entry name" value="PCRF"/>
    <property type="match status" value="1"/>
</dbReference>
<dbReference type="Pfam" id="PF00472">
    <property type="entry name" value="RF-1"/>
    <property type="match status" value="1"/>
</dbReference>
<dbReference type="SMART" id="SM00937">
    <property type="entry name" value="PCRF"/>
    <property type="match status" value="1"/>
</dbReference>
<dbReference type="SUPFAM" id="SSF75620">
    <property type="entry name" value="Release factor"/>
    <property type="match status" value="1"/>
</dbReference>
<dbReference type="PROSITE" id="PS00745">
    <property type="entry name" value="RF_PROK_I"/>
    <property type="match status" value="1"/>
</dbReference>
<sequence>MRPETQSAVTQLDSTLTTIEKVMNPEDLESRVRELEQQASDPTLWDDPDTAQKVTTELSSVQAKLKKLSTLRQRIDDLPVMYELADEEGEDALALADEELAELTADVEALEVKTMLSGEYDSREAVINIRSGAGGVDAADWAEMLMRMYIRWAEKNDHKVDIYDISYAEEAGIKSATFVVHGEYMYGQLSVEQGAHRLVRISPFDNQGRRQTSFAEIEVLPVVEQTDHIDIPDSEVRVDVYRSSGPGGQSVNTTDSAVRLTHIPTGIVVTCQNEKSQIQNKASAMRVLQAKLLERKRQEERAELDALGAGGNASWGNQMRSYVLHPYQMVKDLRTNYEVNDPQKVLDGDIDGLLEAGIRWRMAEQQGQN</sequence>
<gene>
    <name evidence="1" type="primary">prfB</name>
    <name type="ordered locus">DIP0746</name>
</gene>
<name>RF2_CORDI</name>
<proteinExistence type="inferred from homology"/>
<protein>
    <recommendedName>
        <fullName evidence="1">Peptide chain release factor 2</fullName>
        <shortName evidence="1">RF-2</shortName>
    </recommendedName>
</protein>
<feature type="chain" id="PRO_0000166814" description="Peptide chain release factor 2">
    <location>
        <begin position="1"/>
        <end position="369"/>
    </location>
</feature>
<feature type="modified residue" description="N5-methylglutamine" evidence="1">
    <location>
        <position position="249"/>
    </location>
</feature>
<accession>Q6NIM2</accession>
<evidence type="ECO:0000255" key="1">
    <source>
        <dbReference type="HAMAP-Rule" id="MF_00094"/>
    </source>
</evidence>
<reference key="1">
    <citation type="journal article" date="2003" name="Nucleic Acids Res.">
        <title>The complete genome sequence and analysis of Corynebacterium diphtheriae NCTC13129.</title>
        <authorList>
            <person name="Cerdeno-Tarraga A.-M."/>
            <person name="Efstratiou A."/>
            <person name="Dover L.G."/>
            <person name="Holden M.T.G."/>
            <person name="Pallen M.J."/>
            <person name="Bentley S.D."/>
            <person name="Besra G.S."/>
            <person name="Churcher C.M."/>
            <person name="James K.D."/>
            <person name="De Zoysa A."/>
            <person name="Chillingworth T."/>
            <person name="Cronin A."/>
            <person name="Dowd L."/>
            <person name="Feltwell T."/>
            <person name="Hamlin N."/>
            <person name="Holroyd S."/>
            <person name="Jagels K."/>
            <person name="Moule S."/>
            <person name="Quail M.A."/>
            <person name="Rabbinowitsch E."/>
            <person name="Rutherford K.M."/>
            <person name="Thomson N.R."/>
            <person name="Unwin L."/>
            <person name="Whitehead S."/>
            <person name="Barrell B.G."/>
            <person name="Parkhill J."/>
        </authorList>
    </citation>
    <scope>NUCLEOTIDE SEQUENCE [LARGE SCALE GENOMIC DNA]</scope>
    <source>
        <strain>ATCC 700971 / NCTC 13129 / Biotype gravis</strain>
    </source>
</reference>
<keyword id="KW-0963">Cytoplasm</keyword>
<keyword id="KW-0488">Methylation</keyword>
<keyword id="KW-0648">Protein biosynthesis</keyword>
<keyword id="KW-1185">Reference proteome</keyword>